<feature type="chain" id="PRO_0000376720" description="2,3,4,5-tetrahydropyridine-2,6-dicarboxylate N-acetyltransferase">
    <location>
        <begin position="1"/>
        <end position="232"/>
    </location>
</feature>
<protein>
    <recommendedName>
        <fullName evidence="1">2,3,4,5-tetrahydropyridine-2,6-dicarboxylate N-acetyltransferase</fullName>
        <ecNumber evidence="1">2.3.1.89</ecNumber>
    </recommendedName>
    <alternativeName>
        <fullName evidence="1">Tetrahydrodipicolinate N-acetyltransferase</fullName>
        <shortName evidence="1">THP acetyltransferase</shortName>
        <shortName evidence="1">Tetrahydropicolinate acetylase</shortName>
    </alternativeName>
</protein>
<accession>Q03IN0</accession>
<reference key="1">
    <citation type="journal article" date="2006" name="Proc. Natl. Acad. Sci. U.S.A.">
        <title>Comparative genomics of the lactic acid bacteria.</title>
        <authorList>
            <person name="Makarova K.S."/>
            <person name="Slesarev A."/>
            <person name="Wolf Y.I."/>
            <person name="Sorokin A."/>
            <person name="Mirkin B."/>
            <person name="Koonin E.V."/>
            <person name="Pavlov A."/>
            <person name="Pavlova N."/>
            <person name="Karamychev V."/>
            <person name="Polouchine N."/>
            <person name="Shakhova V."/>
            <person name="Grigoriev I."/>
            <person name="Lou Y."/>
            <person name="Rohksar D."/>
            <person name="Lucas S."/>
            <person name="Huang K."/>
            <person name="Goodstein D.M."/>
            <person name="Hawkins T."/>
            <person name="Plengvidhya V."/>
            <person name="Welker D."/>
            <person name="Hughes J."/>
            <person name="Goh Y."/>
            <person name="Benson A."/>
            <person name="Baldwin K."/>
            <person name="Lee J.-H."/>
            <person name="Diaz-Muniz I."/>
            <person name="Dosti B."/>
            <person name="Smeianov V."/>
            <person name="Wechter W."/>
            <person name="Barabote R."/>
            <person name="Lorca G."/>
            <person name="Altermann E."/>
            <person name="Barrangou R."/>
            <person name="Ganesan B."/>
            <person name="Xie Y."/>
            <person name="Rawsthorne H."/>
            <person name="Tamir D."/>
            <person name="Parker C."/>
            <person name="Breidt F."/>
            <person name="Broadbent J.R."/>
            <person name="Hutkins R."/>
            <person name="O'Sullivan D."/>
            <person name="Steele J."/>
            <person name="Unlu G."/>
            <person name="Saier M.H. Jr."/>
            <person name="Klaenhammer T."/>
            <person name="Richardson P."/>
            <person name="Kozyavkin S."/>
            <person name="Weimer B.C."/>
            <person name="Mills D.A."/>
        </authorList>
    </citation>
    <scope>NUCLEOTIDE SEQUENCE [LARGE SCALE GENOMIC DNA]</scope>
    <source>
        <strain>ATCC BAA-491 / LMD-9</strain>
    </source>
</reference>
<organism>
    <name type="scientific">Streptococcus thermophilus (strain ATCC BAA-491 / LMD-9)</name>
    <dbReference type="NCBI Taxonomy" id="322159"/>
    <lineage>
        <taxon>Bacteria</taxon>
        <taxon>Bacillati</taxon>
        <taxon>Bacillota</taxon>
        <taxon>Bacilli</taxon>
        <taxon>Lactobacillales</taxon>
        <taxon>Streptococcaceae</taxon>
        <taxon>Streptococcus</taxon>
    </lineage>
</organism>
<keyword id="KW-0012">Acyltransferase</keyword>
<keyword id="KW-0028">Amino-acid biosynthesis</keyword>
<keyword id="KW-0220">Diaminopimelate biosynthesis</keyword>
<keyword id="KW-0457">Lysine biosynthesis</keyword>
<keyword id="KW-0677">Repeat</keyword>
<keyword id="KW-0808">Transferase</keyword>
<sequence length="232" mass="24120">MTAQKMSAQEIIAFIGNAEKKTNVKVTFEGELATAVPSSVTKLGNVLFGDWKDIEPLLANLTENKDYVVEQDGRNSAVPLLDKRHLNARIEPGAIIRDQVTIEDNAVVMMGAVINIGAEIGAGTMIDMGAILGGRATVGKNSHIGAGAVLAGVIEPASAEPVRIGDNVLVGANAVVIEGVQVGNGSVVAAGAIVTQDVPENVVVAGVPARIIKEIDEKTQQKTALEDALRNL</sequence>
<proteinExistence type="inferred from homology"/>
<dbReference type="EC" id="2.3.1.89" evidence="1"/>
<dbReference type="EMBL" id="CP000419">
    <property type="protein sequence ID" value="ABJ66942.1"/>
    <property type="molecule type" value="Genomic_DNA"/>
</dbReference>
<dbReference type="SMR" id="Q03IN0"/>
<dbReference type="KEGG" id="ste:STER_1814"/>
<dbReference type="HOGENOM" id="CLU_103751_0_0_9"/>
<dbReference type="UniPathway" id="UPA00034">
    <property type="reaction ID" value="UER00022"/>
</dbReference>
<dbReference type="GO" id="GO:0047200">
    <property type="term" value="F:tetrahydrodipicolinate N-acetyltransferase activity"/>
    <property type="evidence" value="ECO:0007669"/>
    <property type="project" value="UniProtKB-EC"/>
</dbReference>
<dbReference type="GO" id="GO:0019877">
    <property type="term" value="P:diaminopimelate biosynthetic process"/>
    <property type="evidence" value="ECO:0007669"/>
    <property type="project" value="UniProtKB-UniRule"/>
</dbReference>
<dbReference type="GO" id="GO:0009089">
    <property type="term" value="P:lysine biosynthetic process via diaminopimelate"/>
    <property type="evidence" value="ECO:0007669"/>
    <property type="project" value="UniProtKB-UniRule"/>
</dbReference>
<dbReference type="Gene3D" id="2.160.10.10">
    <property type="entry name" value="Hexapeptide repeat proteins"/>
    <property type="match status" value="1"/>
</dbReference>
<dbReference type="Gene3D" id="3.30.70.250">
    <property type="entry name" value="Malonyl-CoA ACP transacylase, ACP-binding"/>
    <property type="match status" value="1"/>
</dbReference>
<dbReference type="HAMAP" id="MF_01691">
    <property type="entry name" value="DapH"/>
    <property type="match status" value="1"/>
</dbReference>
<dbReference type="InterPro" id="IPR019873">
    <property type="entry name" value="DapH"/>
</dbReference>
<dbReference type="InterPro" id="IPR013710">
    <property type="entry name" value="DapH_N"/>
</dbReference>
<dbReference type="InterPro" id="IPR001451">
    <property type="entry name" value="Hexapep"/>
</dbReference>
<dbReference type="InterPro" id="IPR018357">
    <property type="entry name" value="Hexapep_transf_CS"/>
</dbReference>
<dbReference type="InterPro" id="IPR050179">
    <property type="entry name" value="Trans_hexapeptide_repeat"/>
</dbReference>
<dbReference type="InterPro" id="IPR011004">
    <property type="entry name" value="Trimer_LpxA-like_sf"/>
</dbReference>
<dbReference type="NCBIfam" id="TIGR03532">
    <property type="entry name" value="DapD_Ac"/>
    <property type="match status" value="1"/>
</dbReference>
<dbReference type="PANTHER" id="PTHR43300:SF10">
    <property type="entry name" value="2,3,4,5-TETRAHYDROPYRIDINE-2,6-DICARBOXYLATE N-ACETYLTRANSFERASE"/>
    <property type="match status" value="1"/>
</dbReference>
<dbReference type="PANTHER" id="PTHR43300">
    <property type="entry name" value="ACETYLTRANSFERASE"/>
    <property type="match status" value="1"/>
</dbReference>
<dbReference type="Pfam" id="PF08503">
    <property type="entry name" value="DapH_N"/>
    <property type="match status" value="1"/>
</dbReference>
<dbReference type="Pfam" id="PF00132">
    <property type="entry name" value="Hexapep"/>
    <property type="match status" value="1"/>
</dbReference>
<dbReference type="Pfam" id="PF14602">
    <property type="entry name" value="Hexapep_2"/>
    <property type="match status" value="1"/>
</dbReference>
<dbReference type="SUPFAM" id="SSF51161">
    <property type="entry name" value="Trimeric LpxA-like enzymes"/>
    <property type="match status" value="1"/>
</dbReference>
<dbReference type="PROSITE" id="PS00101">
    <property type="entry name" value="HEXAPEP_TRANSFERASES"/>
    <property type="match status" value="2"/>
</dbReference>
<gene>
    <name evidence="1" type="primary">dapH</name>
    <name type="ordered locus">STER_1814</name>
</gene>
<evidence type="ECO:0000255" key="1">
    <source>
        <dbReference type="HAMAP-Rule" id="MF_01691"/>
    </source>
</evidence>
<comment type="function">
    <text evidence="1">Catalyzes the transfer of an acetyl group from acetyl-CoA to tetrahydrodipicolinate.</text>
</comment>
<comment type="catalytic activity">
    <reaction evidence="1">
        <text>(S)-2,3,4,5-tetrahydrodipicolinate + acetyl-CoA + H2O = L-2-acetamido-6-oxoheptanedioate + CoA</text>
        <dbReference type="Rhea" id="RHEA:13085"/>
        <dbReference type="ChEBI" id="CHEBI:15377"/>
        <dbReference type="ChEBI" id="CHEBI:16845"/>
        <dbReference type="ChEBI" id="CHEBI:57287"/>
        <dbReference type="ChEBI" id="CHEBI:57288"/>
        <dbReference type="ChEBI" id="CHEBI:58117"/>
        <dbReference type="EC" id="2.3.1.89"/>
    </reaction>
</comment>
<comment type="pathway">
    <text evidence="1">Amino-acid biosynthesis; L-lysine biosynthesis via DAP pathway; LL-2,6-diaminopimelate from (S)-tetrahydrodipicolinate (acetylase route): step 1/3.</text>
</comment>
<comment type="similarity">
    <text evidence="1">Belongs to the transferase hexapeptide repeat family. DapH subfamily.</text>
</comment>
<name>DAPH_STRTD</name>